<dbReference type="EC" id="2.1.1.107" evidence="1"/>
<dbReference type="EC" id="1.3.1.76" evidence="1"/>
<dbReference type="EC" id="4.99.1.4" evidence="1"/>
<dbReference type="EMBL" id="CU928162">
    <property type="protein sequence ID" value="CAR10169.2"/>
    <property type="molecule type" value="Genomic_DNA"/>
</dbReference>
<dbReference type="RefSeq" id="WP_000349848.1">
    <property type="nucleotide sequence ID" value="NC_011745.1"/>
</dbReference>
<dbReference type="SMR" id="B7N1F1"/>
<dbReference type="KEGG" id="ecq:ECED1_4032"/>
<dbReference type="HOGENOM" id="CLU_011276_2_0_6"/>
<dbReference type="UniPathway" id="UPA00148">
    <property type="reaction ID" value="UER00211"/>
</dbReference>
<dbReference type="UniPathway" id="UPA00148">
    <property type="reaction ID" value="UER00222"/>
</dbReference>
<dbReference type="UniPathway" id="UPA00262">
    <property type="reaction ID" value="UER00211"/>
</dbReference>
<dbReference type="UniPathway" id="UPA00262">
    <property type="reaction ID" value="UER00222"/>
</dbReference>
<dbReference type="UniPathway" id="UPA00262">
    <property type="reaction ID" value="UER00376"/>
</dbReference>
<dbReference type="Proteomes" id="UP000000748">
    <property type="component" value="Chromosome"/>
</dbReference>
<dbReference type="GO" id="GO:0051287">
    <property type="term" value="F:NAD binding"/>
    <property type="evidence" value="ECO:0007669"/>
    <property type="project" value="InterPro"/>
</dbReference>
<dbReference type="GO" id="GO:0043115">
    <property type="term" value="F:precorrin-2 dehydrogenase activity"/>
    <property type="evidence" value="ECO:0007669"/>
    <property type="project" value="UniProtKB-UniRule"/>
</dbReference>
<dbReference type="GO" id="GO:0051266">
    <property type="term" value="F:sirohydrochlorin ferrochelatase activity"/>
    <property type="evidence" value="ECO:0007669"/>
    <property type="project" value="UniProtKB-EC"/>
</dbReference>
<dbReference type="GO" id="GO:0004851">
    <property type="term" value="F:uroporphyrin-III C-methyltransferase activity"/>
    <property type="evidence" value="ECO:0007669"/>
    <property type="project" value="UniProtKB-UniRule"/>
</dbReference>
<dbReference type="GO" id="GO:0009236">
    <property type="term" value="P:cobalamin biosynthetic process"/>
    <property type="evidence" value="ECO:0007669"/>
    <property type="project" value="UniProtKB-UniRule"/>
</dbReference>
<dbReference type="GO" id="GO:0032259">
    <property type="term" value="P:methylation"/>
    <property type="evidence" value="ECO:0007669"/>
    <property type="project" value="UniProtKB-KW"/>
</dbReference>
<dbReference type="GO" id="GO:0019354">
    <property type="term" value="P:siroheme biosynthetic process"/>
    <property type="evidence" value="ECO:0007669"/>
    <property type="project" value="UniProtKB-UniRule"/>
</dbReference>
<dbReference type="CDD" id="cd11642">
    <property type="entry name" value="SUMT"/>
    <property type="match status" value="1"/>
</dbReference>
<dbReference type="FunFam" id="1.10.8.210:FF:000001">
    <property type="entry name" value="Siroheme synthase"/>
    <property type="match status" value="1"/>
</dbReference>
<dbReference type="FunFam" id="3.30.160.110:FF:000001">
    <property type="entry name" value="Siroheme synthase"/>
    <property type="match status" value="1"/>
</dbReference>
<dbReference type="FunFam" id="3.30.950.10:FF:000001">
    <property type="entry name" value="Siroheme synthase"/>
    <property type="match status" value="1"/>
</dbReference>
<dbReference type="FunFam" id="3.40.1010.10:FF:000001">
    <property type="entry name" value="Siroheme synthase"/>
    <property type="match status" value="1"/>
</dbReference>
<dbReference type="FunFam" id="3.40.50.720:FF:000092">
    <property type="entry name" value="Siroheme synthase"/>
    <property type="match status" value="1"/>
</dbReference>
<dbReference type="Gene3D" id="3.40.1010.10">
    <property type="entry name" value="Cobalt-precorrin-4 Transmethylase, Domain 1"/>
    <property type="match status" value="1"/>
</dbReference>
<dbReference type="Gene3D" id="3.30.950.10">
    <property type="entry name" value="Methyltransferase, Cobalt-precorrin-4 Transmethylase, Domain 2"/>
    <property type="match status" value="1"/>
</dbReference>
<dbReference type="Gene3D" id="3.40.50.720">
    <property type="entry name" value="NAD(P)-binding Rossmann-like Domain"/>
    <property type="match status" value="1"/>
</dbReference>
<dbReference type="Gene3D" id="1.10.8.210">
    <property type="entry name" value="Sirohaem synthase, dimerisation domain"/>
    <property type="match status" value="1"/>
</dbReference>
<dbReference type="Gene3D" id="3.30.160.110">
    <property type="entry name" value="Siroheme synthase, domain 2"/>
    <property type="match status" value="1"/>
</dbReference>
<dbReference type="HAMAP" id="MF_01646">
    <property type="entry name" value="Siroheme_synth"/>
    <property type="match status" value="1"/>
</dbReference>
<dbReference type="InterPro" id="IPR000878">
    <property type="entry name" value="4pyrrol_Mease"/>
</dbReference>
<dbReference type="InterPro" id="IPR035996">
    <property type="entry name" value="4pyrrol_Methylase_sf"/>
</dbReference>
<dbReference type="InterPro" id="IPR014777">
    <property type="entry name" value="4pyrrole_Mease_sub1"/>
</dbReference>
<dbReference type="InterPro" id="IPR014776">
    <property type="entry name" value="4pyrrole_Mease_sub2"/>
</dbReference>
<dbReference type="InterPro" id="IPR006366">
    <property type="entry name" value="CobA/CysG_C"/>
</dbReference>
<dbReference type="InterPro" id="IPR036291">
    <property type="entry name" value="NAD(P)-bd_dom_sf"/>
</dbReference>
<dbReference type="InterPro" id="IPR050161">
    <property type="entry name" value="Siro_Cobalamin_biosynth"/>
</dbReference>
<dbReference type="InterPro" id="IPR037115">
    <property type="entry name" value="Sirohaem_synt_dimer_dom_sf"/>
</dbReference>
<dbReference type="InterPro" id="IPR012409">
    <property type="entry name" value="Sirohaem_synth"/>
</dbReference>
<dbReference type="InterPro" id="IPR028281">
    <property type="entry name" value="Sirohaem_synthase_central"/>
</dbReference>
<dbReference type="InterPro" id="IPR019478">
    <property type="entry name" value="Sirohaem_synthase_dimer_dom"/>
</dbReference>
<dbReference type="InterPro" id="IPR006367">
    <property type="entry name" value="Sirohaem_synthase_N"/>
</dbReference>
<dbReference type="InterPro" id="IPR003043">
    <property type="entry name" value="Uropor_MeTrfase_CS"/>
</dbReference>
<dbReference type="NCBIfam" id="TIGR01469">
    <property type="entry name" value="cobA_cysG_Cterm"/>
    <property type="match status" value="1"/>
</dbReference>
<dbReference type="NCBIfam" id="TIGR01470">
    <property type="entry name" value="cysG_Nterm"/>
    <property type="match status" value="1"/>
</dbReference>
<dbReference type="NCBIfam" id="NF004790">
    <property type="entry name" value="PRK06136.1"/>
    <property type="match status" value="1"/>
</dbReference>
<dbReference type="NCBIfam" id="NF007922">
    <property type="entry name" value="PRK10637.1"/>
    <property type="match status" value="1"/>
</dbReference>
<dbReference type="PANTHER" id="PTHR45790:SF1">
    <property type="entry name" value="SIROHEME SYNTHASE"/>
    <property type="match status" value="1"/>
</dbReference>
<dbReference type="PANTHER" id="PTHR45790">
    <property type="entry name" value="SIROHEME SYNTHASE-RELATED"/>
    <property type="match status" value="1"/>
</dbReference>
<dbReference type="Pfam" id="PF10414">
    <property type="entry name" value="CysG_dimeriser"/>
    <property type="match status" value="1"/>
</dbReference>
<dbReference type="Pfam" id="PF13241">
    <property type="entry name" value="NAD_binding_7"/>
    <property type="match status" value="1"/>
</dbReference>
<dbReference type="Pfam" id="PF14824">
    <property type="entry name" value="Sirohm_synth_M"/>
    <property type="match status" value="1"/>
</dbReference>
<dbReference type="Pfam" id="PF00590">
    <property type="entry name" value="TP_methylase"/>
    <property type="match status" value="1"/>
</dbReference>
<dbReference type="PIRSF" id="PIRSF036426">
    <property type="entry name" value="Sirohaem_synth"/>
    <property type="match status" value="1"/>
</dbReference>
<dbReference type="SUPFAM" id="SSF51735">
    <property type="entry name" value="NAD(P)-binding Rossmann-fold domains"/>
    <property type="match status" value="1"/>
</dbReference>
<dbReference type="SUPFAM" id="SSF75615">
    <property type="entry name" value="Siroheme synthase middle domains-like"/>
    <property type="match status" value="1"/>
</dbReference>
<dbReference type="SUPFAM" id="SSF53790">
    <property type="entry name" value="Tetrapyrrole methylase"/>
    <property type="match status" value="1"/>
</dbReference>
<dbReference type="PROSITE" id="PS00839">
    <property type="entry name" value="SUMT_1"/>
    <property type="match status" value="1"/>
</dbReference>
<dbReference type="PROSITE" id="PS00840">
    <property type="entry name" value="SUMT_2"/>
    <property type="match status" value="1"/>
</dbReference>
<organism>
    <name type="scientific">Escherichia coli O81 (strain ED1a)</name>
    <dbReference type="NCBI Taxonomy" id="585397"/>
    <lineage>
        <taxon>Bacteria</taxon>
        <taxon>Pseudomonadati</taxon>
        <taxon>Pseudomonadota</taxon>
        <taxon>Gammaproteobacteria</taxon>
        <taxon>Enterobacterales</taxon>
        <taxon>Enterobacteriaceae</taxon>
        <taxon>Escherichia</taxon>
    </lineage>
</organism>
<feature type="chain" id="PRO_1000186941" description="Siroheme synthase">
    <location>
        <begin position="1"/>
        <end position="457"/>
    </location>
</feature>
<feature type="region of interest" description="Precorrin-2 dehydrogenase /sirohydrochlorin ferrochelatase" evidence="1">
    <location>
        <begin position="1"/>
        <end position="204"/>
    </location>
</feature>
<feature type="region of interest" description="Uroporphyrinogen-III C-methyltransferase" evidence="1">
    <location>
        <begin position="216"/>
        <end position="457"/>
    </location>
</feature>
<feature type="active site" description="Proton acceptor" evidence="1">
    <location>
        <position position="248"/>
    </location>
</feature>
<feature type="active site" description="Proton donor" evidence="1">
    <location>
        <position position="270"/>
    </location>
</feature>
<feature type="binding site" evidence="1">
    <location>
        <begin position="22"/>
        <end position="23"/>
    </location>
    <ligand>
        <name>NAD(+)</name>
        <dbReference type="ChEBI" id="CHEBI:57540"/>
    </ligand>
</feature>
<feature type="binding site" evidence="1">
    <location>
        <begin position="43"/>
        <end position="44"/>
    </location>
    <ligand>
        <name>NAD(+)</name>
        <dbReference type="ChEBI" id="CHEBI:57540"/>
    </ligand>
</feature>
<feature type="binding site" evidence="1">
    <location>
        <position position="225"/>
    </location>
    <ligand>
        <name>S-adenosyl-L-methionine</name>
        <dbReference type="ChEBI" id="CHEBI:59789"/>
    </ligand>
</feature>
<feature type="binding site" evidence="1">
    <location>
        <begin position="301"/>
        <end position="303"/>
    </location>
    <ligand>
        <name>S-adenosyl-L-methionine</name>
        <dbReference type="ChEBI" id="CHEBI:59789"/>
    </ligand>
</feature>
<feature type="binding site" evidence="1">
    <location>
        <position position="306"/>
    </location>
    <ligand>
        <name>S-adenosyl-L-methionine</name>
        <dbReference type="ChEBI" id="CHEBI:59789"/>
    </ligand>
</feature>
<feature type="binding site" evidence="1">
    <location>
        <begin position="331"/>
        <end position="332"/>
    </location>
    <ligand>
        <name>S-adenosyl-L-methionine</name>
        <dbReference type="ChEBI" id="CHEBI:59789"/>
    </ligand>
</feature>
<feature type="binding site" evidence="1">
    <location>
        <position position="382"/>
    </location>
    <ligand>
        <name>S-adenosyl-L-methionine</name>
        <dbReference type="ChEBI" id="CHEBI:59789"/>
    </ligand>
</feature>
<feature type="binding site" evidence="1">
    <location>
        <position position="411"/>
    </location>
    <ligand>
        <name>S-adenosyl-L-methionine</name>
        <dbReference type="ChEBI" id="CHEBI:59789"/>
    </ligand>
</feature>
<feature type="modified residue" description="Phosphoserine" evidence="1">
    <location>
        <position position="128"/>
    </location>
</feature>
<comment type="function">
    <text evidence="1">Multifunctional enzyme that catalyzes the SAM-dependent methylations of uroporphyrinogen III at position C-2 and C-7 to form precorrin-2 via precorrin-1. Then it catalyzes the NAD-dependent ring dehydrogenation of precorrin-2 to yield sirohydrochlorin. Finally, it catalyzes the ferrochelation of sirohydrochlorin to yield siroheme.</text>
</comment>
<comment type="catalytic activity">
    <reaction evidence="1">
        <text>uroporphyrinogen III + 2 S-adenosyl-L-methionine = precorrin-2 + 2 S-adenosyl-L-homocysteine + H(+)</text>
        <dbReference type="Rhea" id="RHEA:32459"/>
        <dbReference type="ChEBI" id="CHEBI:15378"/>
        <dbReference type="ChEBI" id="CHEBI:57308"/>
        <dbReference type="ChEBI" id="CHEBI:57856"/>
        <dbReference type="ChEBI" id="CHEBI:58827"/>
        <dbReference type="ChEBI" id="CHEBI:59789"/>
        <dbReference type="EC" id="2.1.1.107"/>
    </reaction>
</comment>
<comment type="catalytic activity">
    <reaction evidence="1">
        <text>precorrin-2 + NAD(+) = sirohydrochlorin + NADH + 2 H(+)</text>
        <dbReference type="Rhea" id="RHEA:15613"/>
        <dbReference type="ChEBI" id="CHEBI:15378"/>
        <dbReference type="ChEBI" id="CHEBI:57540"/>
        <dbReference type="ChEBI" id="CHEBI:57945"/>
        <dbReference type="ChEBI" id="CHEBI:58351"/>
        <dbReference type="ChEBI" id="CHEBI:58827"/>
        <dbReference type="EC" id="1.3.1.76"/>
    </reaction>
</comment>
<comment type="catalytic activity">
    <reaction evidence="1">
        <text>siroheme + 2 H(+) = sirohydrochlorin + Fe(2+)</text>
        <dbReference type="Rhea" id="RHEA:24360"/>
        <dbReference type="ChEBI" id="CHEBI:15378"/>
        <dbReference type="ChEBI" id="CHEBI:29033"/>
        <dbReference type="ChEBI" id="CHEBI:58351"/>
        <dbReference type="ChEBI" id="CHEBI:60052"/>
        <dbReference type="EC" id="4.99.1.4"/>
    </reaction>
</comment>
<comment type="pathway">
    <text evidence="1">Cofactor biosynthesis; adenosylcobalamin biosynthesis; precorrin-2 from uroporphyrinogen III: step 1/1.</text>
</comment>
<comment type="pathway">
    <text evidence="1">Cofactor biosynthesis; adenosylcobalamin biosynthesis; sirohydrochlorin from precorrin-2: step 1/1.</text>
</comment>
<comment type="pathway">
    <text evidence="1">Porphyrin-containing compound metabolism; siroheme biosynthesis; precorrin-2 from uroporphyrinogen III: step 1/1.</text>
</comment>
<comment type="pathway">
    <text evidence="1">Porphyrin-containing compound metabolism; siroheme biosynthesis; siroheme from sirohydrochlorin: step 1/1.</text>
</comment>
<comment type="pathway">
    <text evidence="1">Porphyrin-containing compound metabolism; siroheme biosynthesis; sirohydrochlorin from precorrin-2: step 1/1.</text>
</comment>
<comment type="similarity">
    <text evidence="1">In the N-terminal section; belongs to the precorrin-2 dehydrogenase / sirohydrochlorin ferrochelatase family.</text>
</comment>
<comment type="similarity">
    <text evidence="1">In the C-terminal section; belongs to the precorrin methyltransferase family.</text>
</comment>
<gene>
    <name evidence="1" type="primary">cysG</name>
    <name type="ordered locus">ECED1_4032</name>
</gene>
<evidence type="ECO:0000255" key="1">
    <source>
        <dbReference type="HAMAP-Rule" id="MF_01646"/>
    </source>
</evidence>
<accession>B7N1F1</accession>
<keyword id="KW-0169">Cobalamin biosynthesis</keyword>
<keyword id="KW-0456">Lyase</keyword>
<keyword id="KW-0489">Methyltransferase</keyword>
<keyword id="KW-0511">Multifunctional enzyme</keyword>
<keyword id="KW-0520">NAD</keyword>
<keyword id="KW-0560">Oxidoreductase</keyword>
<keyword id="KW-0597">Phosphoprotein</keyword>
<keyword id="KW-0627">Porphyrin biosynthesis</keyword>
<keyword id="KW-0949">S-adenosyl-L-methionine</keyword>
<keyword id="KW-0808">Transferase</keyword>
<name>CYSG_ECO81</name>
<sequence>MDHLPIFCQLRDRDCLIVGGGDVAERKARLLLDAGARLTVNALAFIPQFTAWADAGMLTLVEGPFDESLLDTCWLAIAATDDDALNQRVSEAAEARRIFCNVVDAPKAASFIMPSIIDRSPLMVAVSSGGTSPVLARLLREKLESLLPLHLGQVAKYAGQLRGRVKQQFATMGERRRFWEKLFVNDRLAQSLANNDQKAITETTEQLINEPLDHRGEVVLVGAGPGDAGLLTLKGLQQIQQADVVVYDRLISDDIMNLVRRDADRVFVGKRAGYHCVPQEEINQILLREAQKGKRVVRLKGGDPFIFGRGGEELETLCNAGIPFSVVPGITAASGCSAYSGIPLTHRDYAQSVRLITGHLKTGGELDWENLAAEKQTLVFYMGLNQAATIQQKLIEYGMPGEMPVAIVENGTAVTQRVIDGTLTQLGELAQQMNSPSLIIIGRVVGLRDKLNWFSNH</sequence>
<protein>
    <recommendedName>
        <fullName evidence="1">Siroheme synthase</fullName>
    </recommendedName>
    <domain>
        <recommendedName>
            <fullName evidence="1">Uroporphyrinogen-III C-methyltransferase</fullName>
            <shortName evidence="1">Urogen III methylase</shortName>
            <ecNumber evidence="1">2.1.1.107</ecNumber>
        </recommendedName>
        <alternativeName>
            <fullName evidence="1">SUMT</fullName>
        </alternativeName>
        <alternativeName>
            <fullName evidence="1">Uroporphyrinogen III methylase</fullName>
            <shortName evidence="1">UROM</shortName>
        </alternativeName>
    </domain>
    <domain>
        <recommendedName>
            <fullName evidence="1">Precorrin-2 dehydrogenase</fullName>
            <ecNumber evidence="1">1.3.1.76</ecNumber>
        </recommendedName>
    </domain>
    <domain>
        <recommendedName>
            <fullName evidence="1">Sirohydrochlorin ferrochelatase</fullName>
            <ecNumber evidence="1">4.99.1.4</ecNumber>
        </recommendedName>
    </domain>
</protein>
<proteinExistence type="inferred from homology"/>
<reference key="1">
    <citation type="journal article" date="2009" name="PLoS Genet.">
        <title>Organised genome dynamics in the Escherichia coli species results in highly diverse adaptive paths.</title>
        <authorList>
            <person name="Touchon M."/>
            <person name="Hoede C."/>
            <person name="Tenaillon O."/>
            <person name="Barbe V."/>
            <person name="Baeriswyl S."/>
            <person name="Bidet P."/>
            <person name="Bingen E."/>
            <person name="Bonacorsi S."/>
            <person name="Bouchier C."/>
            <person name="Bouvet O."/>
            <person name="Calteau A."/>
            <person name="Chiapello H."/>
            <person name="Clermont O."/>
            <person name="Cruveiller S."/>
            <person name="Danchin A."/>
            <person name="Diard M."/>
            <person name="Dossat C."/>
            <person name="Karoui M.E."/>
            <person name="Frapy E."/>
            <person name="Garry L."/>
            <person name="Ghigo J.M."/>
            <person name="Gilles A.M."/>
            <person name="Johnson J."/>
            <person name="Le Bouguenec C."/>
            <person name="Lescat M."/>
            <person name="Mangenot S."/>
            <person name="Martinez-Jehanne V."/>
            <person name="Matic I."/>
            <person name="Nassif X."/>
            <person name="Oztas S."/>
            <person name="Petit M.A."/>
            <person name="Pichon C."/>
            <person name="Rouy Z."/>
            <person name="Ruf C.S."/>
            <person name="Schneider D."/>
            <person name="Tourret J."/>
            <person name="Vacherie B."/>
            <person name="Vallenet D."/>
            <person name="Medigue C."/>
            <person name="Rocha E.P.C."/>
            <person name="Denamur E."/>
        </authorList>
    </citation>
    <scope>NUCLEOTIDE SEQUENCE [LARGE SCALE GENOMIC DNA]</scope>
    <source>
        <strain>ED1a</strain>
    </source>
</reference>